<gene>
    <name evidence="1" type="primary">miaB</name>
    <name type="ordered locus">Bd2086</name>
</gene>
<dbReference type="EC" id="2.8.4.3" evidence="1"/>
<dbReference type="EMBL" id="BX842651">
    <property type="protein sequence ID" value="CAE79931.1"/>
    <property type="molecule type" value="Genomic_DNA"/>
</dbReference>
<dbReference type="RefSeq" id="WP_011164533.1">
    <property type="nucleotide sequence ID" value="NC_005363.1"/>
</dbReference>
<dbReference type="SMR" id="Q6MLC6"/>
<dbReference type="STRING" id="264462.Bd2086"/>
<dbReference type="GeneID" id="93013033"/>
<dbReference type="KEGG" id="bba:Bd2086"/>
<dbReference type="eggNOG" id="COG0621">
    <property type="taxonomic scope" value="Bacteria"/>
</dbReference>
<dbReference type="HOGENOM" id="CLU_018697_2_0_7"/>
<dbReference type="Proteomes" id="UP000008080">
    <property type="component" value="Chromosome"/>
</dbReference>
<dbReference type="GO" id="GO:0005829">
    <property type="term" value="C:cytosol"/>
    <property type="evidence" value="ECO:0007669"/>
    <property type="project" value="TreeGrafter"/>
</dbReference>
<dbReference type="GO" id="GO:0051539">
    <property type="term" value="F:4 iron, 4 sulfur cluster binding"/>
    <property type="evidence" value="ECO:0007669"/>
    <property type="project" value="UniProtKB-UniRule"/>
</dbReference>
<dbReference type="GO" id="GO:0046872">
    <property type="term" value="F:metal ion binding"/>
    <property type="evidence" value="ECO:0007669"/>
    <property type="project" value="UniProtKB-KW"/>
</dbReference>
<dbReference type="GO" id="GO:0035597">
    <property type="term" value="F:N6-isopentenyladenosine methylthiotransferase activity"/>
    <property type="evidence" value="ECO:0007669"/>
    <property type="project" value="TreeGrafter"/>
</dbReference>
<dbReference type="CDD" id="cd01335">
    <property type="entry name" value="Radical_SAM"/>
    <property type="match status" value="1"/>
</dbReference>
<dbReference type="FunFam" id="3.40.50.12160:FF:000003">
    <property type="entry name" value="CDK5 regulatory subunit-associated protein 1"/>
    <property type="match status" value="1"/>
</dbReference>
<dbReference type="FunFam" id="3.80.30.20:FF:000001">
    <property type="entry name" value="tRNA-2-methylthio-N(6)-dimethylallyladenosine synthase 2"/>
    <property type="match status" value="1"/>
</dbReference>
<dbReference type="Gene3D" id="3.40.50.12160">
    <property type="entry name" value="Methylthiotransferase, N-terminal domain"/>
    <property type="match status" value="1"/>
</dbReference>
<dbReference type="Gene3D" id="3.80.30.20">
    <property type="entry name" value="tm_1862 like domain"/>
    <property type="match status" value="1"/>
</dbReference>
<dbReference type="HAMAP" id="MF_01864">
    <property type="entry name" value="tRNA_metthiotr_MiaB"/>
    <property type="match status" value="1"/>
</dbReference>
<dbReference type="InterPro" id="IPR006638">
    <property type="entry name" value="Elp3/MiaA/NifB-like_rSAM"/>
</dbReference>
<dbReference type="InterPro" id="IPR005839">
    <property type="entry name" value="Methylthiotransferase"/>
</dbReference>
<dbReference type="InterPro" id="IPR020612">
    <property type="entry name" value="Methylthiotransferase_CS"/>
</dbReference>
<dbReference type="InterPro" id="IPR013848">
    <property type="entry name" value="Methylthiotransferase_N"/>
</dbReference>
<dbReference type="InterPro" id="IPR038135">
    <property type="entry name" value="Methylthiotransferase_N_sf"/>
</dbReference>
<dbReference type="InterPro" id="IPR006463">
    <property type="entry name" value="MiaB_methiolase"/>
</dbReference>
<dbReference type="InterPro" id="IPR007197">
    <property type="entry name" value="rSAM"/>
</dbReference>
<dbReference type="InterPro" id="IPR023404">
    <property type="entry name" value="rSAM_horseshoe"/>
</dbReference>
<dbReference type="InterPro" id="IPR002792">
    <property type="entry name" value="TRAM_dom"/>
</dbReference>
<dbReference type="NCBIfam" id="TIGR01574">
    <property type="entry name" value="miaB-methiolase"/>
    <property type="match status" value="1"/>
</dbReference>
<dbReference type="NCBIfam" id="TIGR00089">
    <property type="entry name" value="MiaB/RimO family radical SAM methylthiotransferase"/>
    <property type="match status" value="1"/>
</dbReference>
<dbReference type="PANTHER" id="PTHR43020">
    <property type="entry name" value="CDK5 REGULATORY SUBUNIT-ASSOCIATED PROTEIN 1"/>
    <property type="match status" value="1"/>
</dbReference>
<dbReference type="PANTHER" id="PTHR43020:SF2">
    <property type="entry name" value="MITOCHONDRIAL TRNA METHYLTHIOTRANSFERASE CDK5RAP1"/>
    <property type="match status" value="1"/>
</dbReference>
<dbReference type="Pfam" id="PF04055">
    <property type="entry name" value="Radical_SAM"/>
    <property type="match status" value="1"/>
</dbReference>
<dbReference type="Pfam" id="PF01938">
    <property type="entry name" value="TRAM"/>
    <property type="match status" value="1"/>
</dbReference>
<dbReference type="Pfam" id="PF00919">
    <property type="entry name" value="UPF0004"/>
    <property type="match status" value="1"/>
</dbReference>
<dbReference type="SFLD" id="SFLDF00273">
    <property type="entry name" value="(dimethylallyl)adenosine_tRNA"/>
    <property type="match status" value="1"/>
</dbReference>
<dbReference type="SFLD" id="SFLDG01082">
    <property type="entry name" value="B12-binding_domain_containing"/>
    <property type="match status" value="1"/>
</dbReference>
<dbReference type="SFLD" id="SFLDG01061">
    <property type="entry name" value="methylthiotransferase"/>
    <property type="match status" value="1"/>
</dbReference>
<dbReference type="SMART" id="SM00729">
    <property type="entry name" value="Elp3"/>
    <property type="match status" value="1"/>
</dbReference>
<dbReference type="SUPFAM" id="SSF102114">
    <property type="entry name" value="Radical SAM enzymes"/>
    <property type="match status" value="1"/>
</dbReference>
<dbReference type="PROSITE" id="PS51449">
    <property type="entry name" value="MTTASE_N"/>
    <property type="match status" value="1"/>
</dbReference>
<dbReference type="PROSITE" id="PS01278">
    <property type="entry name" value="MTTASE_RADICAL"/>
    <property type="match status" value="1"/>
</dbReference>
<dbReference type="PROSITE" id="PS51918">
    <property type="entry name" value="RADICAL_SAM"/>
    <property type="match status" value="1"/>
</dbReference>
<dbReference type="PROSITE" id="PS50926">
    <property type="entry name" value="TRAM"/>
    <property type="match status" value="1"/>
</dbReference>
<evidence type="ECO:0000255" key="1">
    <source>
        <dbReference type="HAMAP-Rule" id="MF_01864"/>
    </source>
</evidence>
<evidence type="ECO:0000255" key="2">
    <source>
        <dbReference type="PROSITE-ProRule" id="PRU01266"/>
    </source>
</evidence>
<organism>
    <name type="scientific">Bdellovibrio bacteriovorus (strain ATCC 15356 / DSM 50701 / NCIMB 9529 / HD100)</name>
    <dbReference type="NCBI Taxonomy" id="264462"/>
    <lineage>
        <taxon>Bacteria</taxon>
        <taxon>Pseudomonadati</taxon>
        <taxon>Bdellovibrionota</taxon>
        <taxon>Bdellovibrionia</taxon>
        <taxon>Bdellovibrionales</taxon>
        <taxon>Pseudobdellovibrionaceae</taxon>
        <taxon>Bdellovibrio</taxon>
    </lineage>
</organism>
<accession>Q6MLC6</accession>
<sequence length="453" mass="51704">MDDITQNLESVEKNPDIGMGRGVYISTYGCQMNVNDTERMYALLEMQNFVPVTDPKKASLIIINSCSVREKPVHKVYSEVGTYKYMKRKNPELKIGVGGCVGQQEKENLMKTQPMIDFVFGTDQIDSLPQLVAKSFAGERRLVNSRFEHRSPYHIETLVRNPGVATYVNITKGCDNFCTFCVVPYTRGREKSRPVQHILTDIRHLVKRGVKEVTLLGQNVNSYQGDEGIDFADLLAKVAKETDVERIRYTTSHPKDFNQKLVDVMAEHSNKIMEYIHLPFQAGSTKVLERMNRNYTREEYLERIAMIQKGLPNVCFSTDIIVGFPGETEEDFQDTLNMVTEVGFETIFAFSYSPRPFTKAAKFEDQLPEDVKNERLNRLFDVHEAMAFERVKRYEGTTMKVLVENVDRDHGKMQGRSTGNKLVHFLGTADLIGKTVDVKITKAFPAVFRGEMI</sequence>
<name>MIAB_BDEBA</name>
<protein>
    <recommendedName>
        <fullName evidence="1">tRNA-2-methylthio-N(6)-dimethylallyladenosine synthase</fullName>
        <ecNumber evidence="1">2.8.4.3</ecNumber>
    </recommendedName>
    <alternativeName>
        <fullName evidence="1">(Dimethylallyl)adenosine tRNA methylthiotransferase MiaB</fullName>
    </alternativeName>
    <alternativeName>
        <fullName evidence="1">tRNA-i(6)A37 methylthiotransferase</fullName>
    </alternativeName>
</protein>
<comment type="function">
    <text evidence="1">Catalyzes the methylthiolation of N6-(dimethylallyl)adenosine (i(6)A), leading to the formation of 2-methylthio-N6-(dimethylallyl)adenosine (ms(2)i(6)A) at position 37 in tRNAs that read codons beginning with uridine.</text>
</comment>
<comment type="catalytic activity">
    <reaction evidence="1">
        <text>N(6)-dimethylallyladenosine(37) in tRNA + (sulfur carrier)-SH + AH2 + 2 S-adenosyl-L-methionine = 2-methylsulfanyl-N(6)-dimethylallyladenosine(37) in tRNA + (sulfur carrier)-H + 5'-deoxyadenosine + L-methionine + A + S-adenosyl-L-homocysteine + 2 H(+)</text>
        <dbReference type="Rhea" id="RHEA:37067"/>
        <dbReference type="Rhea" id="RHEA-COMP:10375"/>
        <dbReference type="Rhea" id="RHEA-COMP:10376"/>
        <dbReference type="Rhea" id="RHEA-COMP:14737"/>
        <dbReference type="Rhea" id="RHEA-COMP:14739"/>
        <dbReference type="ChEBI" id="CHEBI:13193"/>
        <dbReference type="ChEBI" id="CHEBI:15378"/>
        <dbReference type="ChEBI" id="CHEBI:17319"/>
        <dbReference type="ChEBI" id="CHEBI:17499"/>
        <dbReference type="ChEBI" id="CHEBI:29917"/>
        <dbReference type="ChEBI" id="CHEBI:57844"/>
        <dbReference type="ChEBI" id="CHEBI:57856"/>
        <dbReference type="ChEBI" id="CHEBI:59789"/>
        <dbReference type="ChEBI" id="CHEBI:64428"/>
        <dbReference type="ChEBI" id="CHEBI:74415"/>
        <dbReference type="ChEBI" id="CHEBI:74417"/>
        <dbReference type="EC" id="2.8.4.3"/>
    </reaction>
</comment>
<comment type="cofactor">
    <cofactor evidence="1">
        <name>[4Fe-4S] cluster</name>
        <dbReference type="ChEBI" id="CHEBI:49883"/>
    </cofactor>
    <text evidence="1">Binds 2 [4Fe-4S] clusters. One cluster is coordinated with 3 cysteines and an exchangeable S-adenosyl-L-methionine.</text>
</comment>
<comment type="subunit">
    <text evidence="1">Monomer.</text>
</comment>
<comment type="subcellular location">
    <subcellularLocation>
        <location evidence="1">Cytoplasm</location>
    </subcellularLocation>
</comment>
<comment type="similarity">
    <text evidence="1">Belongs to the methylthiotransferase family. MiaB subfamily.</text>
</comment>
<feature type="chain" id="PRO_0000374149" description="tRNA-2-methylthio-N(6)-dimethylallyladenosine synthase">
    <location>
        <begin position="1"/>
        <end position="453"/>
    </location>
</feature>
<feature type="domain" description="MTTase N-terminal" evidence="1">
    <location>
        <begin position="21"/>
        <end position="137"/>
    </location>
</feature>
<feature type="domain" description="Radical SAM core" evidence="2">
    <location>
        <begin position="160"/>
        <end position="389"/>
    </location>
</feature>
<feature type="domain" description="TRAM" evidence="1">
    <location>
        <begin position="392"/>
        <end position="453"/>
    </location>
</feature>
<feature type="binding site" evidence="1">
    <location>
        <position position="30"/>
    </location>
    <ligand>
        <name>[4Fe-4S] cluster</name>
        <dbReference type="ChEBI" id="CHEBI:49883"/>
        <label>1</label>
    </ligand>
</feature>
<feature type="binding site" evidence="1">
    <location>
        <position position="66"/>
    </location>
    <ligand>
        <name>[4Fe-4S] cluster</name>
        <dbReference type="ChEBI" id="CHEBI:49883"/>
        <label>1</label>
    </ligand>
</feature>
<feature type="binding site" evidence="1">
    <location>
        <position position="100"/>
    </location>
    <ligand>
        <name>[4Fe-4S] cluster</name>
        <dbReference type="ChEBI" id="CHEBI:49883"/>
        <label>1</label>
    </ligand>
</feature>
<feature type="binding site" evidence="1">
    <location>
        <position position="174"/>
    </location>
    <ligand>
        <name>[4Fe-4S] cluster</name>
        <dbReference type="ChEBI" id="CHEBI:49883"/>
        <label>2</label>
        <note>4Fe-4S-S-AdoMet</note>
    </ligand>
</feature>
<feature type="binding site" evidence="1">
    <location>
        <position position="178"/>
    </location>
    <ligand>
        <name>[4Fe-4S] cluster</name>
        <dbReference type="ChEBI" id="CHEBI:49883"/>
        <label>2</label>
        <note>4Fe-4S-S-AdoMet</note>
    </ligand>
</feature>
<feature type="binding site" evidence="1">
    <location>
        <position position="181"/>
    </location>
    <ligand>
        <name>[4Fe-4S] cluster</name>
        <dbReference type="ChEBI" id="CHEBI:49883"/>
        <label>2</label>
        <note>4Fe-4S-S-AdoMet</note>
    </ligand>
</feature>
<reference key="1">
    <citation type="journal article" date="2004" name="Science">
        <title>A predator unmasked: life cycle of Bdellovibrio bacteriovorus from a genomic perspective.</title>
        <authorList>
            <person name="Rendulic S."/>
            <person name="Jagtap P."/>
            <person name="Rosinus A."/>
            <person name="Eppinger M."/>
            <person name="Baar C."/>
            <person name="Lanz C."/>
            <person name="Keller H."/>
            <person name="Lambert C."/>
            <person name="Evans K.J."/>
            <person name="Goesmann A."/>
            <person name="Meyer F."/>
            <person name="Sockett R.E."/>
            <person name="Schuster S.C."/>
        </authorList>
    </citation>
    <scope>NUCLEOTIDE SEQUENCE [LARGE SCALE GENOMIC DNA]</scope>
    <source>
        <strain>ATCC 15356 / DSM 50701 / NCIMB 9529 / HD100</strain>
    </source>
</reference>
<proteinExistence type="inferred from homology"/>
<keyword id="KW-0004">4Fe-4S</keyword>
<keyword id="KW-0963">Cytoplasm</keyword>
<keyword id="KW-0408">Iron</keyword>
<keyword id="KW-0411">Iron-sulfur</keyword>
<keyword id="KW-0479">Metal-binding</keyword>
<keyword id="KW-1185">Reference proteome</keyword>
<keyword id="KW-0949">S-adenosyl-L-methionine</keyword>
<keyword id="KW-0808">Transferase</keyword>
<keyword id="KW-0819">tRNA processing</keyword>